<sequence length="162" mass="18661">MLNQLENLTERVGGSNKLVDRWLHVRKHLLVAYYNLVGIKPGKESYMRLNEKALDDFCQSLVDYLSAGHFSIYERILHKLEGNGQLLHAAKIWPLLEDNTQRIMDYYDSSLETAIDHDNCLEFQQALSDIGEALEARFVLEDKLIMLVFDAMHDGARVKRPA</sequence>
<dbReference type="EMBL" id="CP000880">
    <property type="protein sequence ID" value="ABX23318.1"/>
    <property type="molecule type" value="Genomic_DNA"/>
</dbReference>
<dbReference type="SMR" id="A9MHD5"/>
<dbReference type="STRING" id="41514.SARI_03493"/>
<dbReference type="KEGG" id="ses:SARI_03493"/>
<dbReference type="HOGENOM" id="CLU_142729_0_0_6"/>
<dbReference type="Proteomes" id="UP000002084">
    <property type="component" value="Chromosome"/>
</dbReference>
<dbReference type="GO" id="GO:0005737">
    <property type="term" value="C:cytoplasm"/>
    <property type="evidence" value="ECO:0007669"/>
    <property type="project" value="UniProtKB-SubCell"/>
</dbReference>
<dbReference type="GO" id="GO:0006355">
    <property type="term" value="P:regulation of DNA-templated transcription"/>
    <property type="evidence" value="ECO:0007669"/>
    <property type="project" value="InterPro"/>
</dbReference>
<dbReference type="FunFam" id="1.20.120.1370:FF:000001">
    <property type="entry name" value="Regulator of sigma D"/>
    <property type="match status" value="1"/>
</dbReference>
<dbReference type="Gene3D" id="1.20.120.1370">
    <property type="entry name" value="Regulator of RNA polymerase sigma(70) subunit, domain 4"/>
    <property type="match status" value="1"/>
</dbReference>
<dbReference type="HAMAP" id="MF_01181">
    <property type="entry name" value="Rsd"/>
    <property type="match status" value="1"/>
</dbReference>
<dbReference type="InterPro" id="IPR038309">
    <property type="entry name" value="Rsd/AlgQ_sf"/>
</dbReference>
<dbReference type="InterPro" id="IPR023785">
    <property type="entry name" value="Sigma70_reg_Rsd"/>
</dbReference>
<dbReference type="InterPro" id="IPR007448">
    <property type="entry name" value="Sigma70_reg_Rsd_AlgQ"/>
</dbReference>
<dbReference type="NCBIfam" id="NF008723">
    <property type="entry name" value="PRK11718.1"/>
    <property type="match status" value="1"/>
</dbReference>
<dbReference type="Pfam" id="PF04353">
    <property type="entry name" value="Rsd_AlgQ"/>
    <property type="match status" value="1"/>
</dbReference>
<dbReference type="PIRSF" id="PIRSF016548">
    <property type="entry name" value="Rsd_AlgQ"/>
    <property type="match status" value="1"/>
</dbReference>
<gene>
    <name evidence="1" type="primary">rsd</name>
    <name type="ordered locus">SARI_03493</name>
</gene>
<proteinExistence type="inferred from homology"/>
<reference key="1">
    <citation type="submission" date="2007-11" db="EMBL/GenBank/DDBJ databases">
        <authorList>
            <consortium name="The Salmonella enterica serovar Arizonae Genome Sequencing Project"/>
            <person name="McClelland M."/>
            <person name="Sanderson E.K."/>
            <person name="Porwollik S."/>
            <person name="Spieth J."/>
            <person name="Clifton W.S."/>
            <person name="Fulton R."/>
            <person name="Chunyan W."/>
            <person name="Wollam A."/>
            <person name="Shah N."/>
            <person name="Pepin K."/>
            <person name="Bhonagiri V."/>
            <person name="Nash W."/>
            <person name="Johnson M."/>
            <person name="Thiruvilangam P."/>
            <person name="Wilson R."/>
        </authorList>
    </citation>
    <scope>NUCLEOTIDE SEQUENCE [LARGE SCALE GENOMIC DNA]</scope>
    <source>
        <strain>ATCC BAA-731 / CDC346-86 / RSK2980</strain>
    </source>
</reference>
<evidence type="ECO:0000255" key="1">
    <source>
        <dbReference type="HAMAP-Rule" id="MF_01181"/>
    </source>
</evidence>
<accession>A9MHD5</accession>
<comment type="function">
    <text evidence="1">Binds RpoD and negatively regulates RpoD-mediated transcription activation by preventing the interaction between the primary sigma factor RpoD with the catalytic core of the RNA polymerase and with promoter DNA. May be involved in replacement of the RNA polymerase sigma subunit from RpoD to RpoS during the transition from exponential growth to the stationary phase.</text>
</comment>
<comment type="subunit">
    <text evidence="1">Interacts with RpoD.</text>
</comment>
<comment type="subcellular location">
    <subcellularLocation>
        <location evidence="1">Cytoplasm</location>
    </subcellularLocation>
</comment>
<comment type="similarity">
    <text evidence="1">Belongs to the Rsd/AlgQ family.</text>
</comment>
<protein>
    <recommendedName>
        <fullName evidence="1">Regulator of sigma D</fullName>
    </recommendedName>
</protein>
<name>RSD_SALAR</name>
<organism>
    <name type="scientific">Salmonella arizonae (strain ATCC BAA-731 / CDC346-86 / RSK2980)</name>
    <dbReference type="NCBI Taxonomy" id="41514"/>
    <lineage>
        <taxon>Bacteria</taxon>
        <taxon>Pseudomonadati</taxon>
        <taxon>Pseudomonadota</taxon>
        <taxon>Gammaproteobacteria</taxon>
        <taxon>Enterobacterales</taxon>
        <taxon>Enterobacteriaceae</taxon>
        <taxon>Salmonella</taxon>
    </lineage>
</organism>
<feature type="chain" id="PRO_1000085445" description="Regulator of sigma D">
    <location>
        <begin position="1"/>
        <end position="162"/>
    </location>
</feature>
<keyword id="KW-0963">Cytoplasm</keyword>
<keyword id="KW-1185">Reference proteome</keyword>
<keyword id="KW-0804">Transcription</keyword>
<keyword id="KW-0805">Transcription regulation</keyword>